<organism>
    <name type="scientific">Brucella ovis (strain ATCC 25840 / 63/290 / NCTC 10512)</name>
    <dbReference type="NCBI Taxonomy" id="444178"/>
    <lineage>
        <taxon>Bacteria</taxon>
        <taxon>Pseudomonadati</taxon>
        <taxon>Pseudomonadota</taxon>
        <taxon>Alphaproteobacteria</taxon>
        <taxon>Hyphomicrobiales</taxon>
        <taxon>Brucellaceae</taxon>
        <taxon>Brucella/Ochrobactrum group</taxon>
        <taxon>Brucella</taxon>
    </lineage>
</organism>
<reference key="1">
    <citation type="journal article" date="2009" name="PLoS ONE">
        <title>Genome degradation in Brucella ovis corresponds with narrowing of its host range and tissue tropism.</title>
        <authorList>
            <person name="Tsolis R.M."/>
            <person name="Seshadri R."/>
            <person name="Santos R.L."/>
            <person name="Sangari F.J."/>
            <person name="Lobo J.M."/>
            <person name="de Jong M.F."/>
            <person name="Ren Q."/>
            <person name="Myers G."/>
            <person name="Brinkac L.M."/>
            <person name="Nelson W.C."/>
            <person name="Deboy R.T."/>
            <person name="Angiuoli S."/>
            <person name="Khouri H."/>
            <person name="Dimitrov G."/>
            <person name="Robinson J.R."/>
            <person name="Mulligan S."/>
            <person name="Walker R.L."/>
            <person name="Elzer P.E."/>
            <person name="Hassan K.A."/>
            <person name="Paulsen I.T."/>
        </authorList>
    </citation>
    <scope>NUCLEOTIDE SEQUENCE [LARGE SCALE GENOMIC DNA]</scope>
    <source>
        <strain>ATCC 25840 / 63/290 / NCTC 10512</strain>
    </source>
</reference>
<protein>
    <recommendedName>
        <fullName evidence="1">NADH-quinone oxidoreductase subunit D</fullName>
        <ecNumber evidence="1">7.1.1.-</ecNumber>
    </recommendedName>
    <alternativeName>
        <fullName evidence="1">NADH dehydrogenase I subunit D</fullName>
    </alternativeName>
    <alternativeName>
        <fullName evidence="1">NDH-1 subunit D</fullName>
    </alternativeName>
</protein>
<accession>A5VPY6</accession>
<feature type="chain" id="PRO_0000357787" description="NADH-quinone oxidoreductase subunit D">
    <location>
        <begin position="1"/>
        <end position="396"/>
    </location>
</feature>
<sequence length="396" mass="44983">MAETQVRNFNINFGPQHPAAHGVLRLVLELDGEVVERVDPHIGLLHRGTEKLMEAKTYLQAVPYLDRLDYVAPMNQEHAYALAVERLLDIEVPKRGQLIRVLYSEIGRILNHLLNVTTQAMDVGALTPPLWGFEEREKLMVFYERACGARMHAAYFRPGGVHQDLPDQLIEDIGKWIDPFFTTLKNLDDLITPNRIFKQRNVDIGVVKLEDAWAWGFSGVMVRGSGAAWDLRKSQPYECYSEMEFDIPVGKNGDCYDRYLIRMEEMRQSARIMRQCVDLLLGKERVGPVSNTDHKIVPPKRGEMKRSMEALIHHFKLYTEGYHVPAGEVYAAVEAPKGEFGVYLVSDGSNKPYRCKLRAPGFAHLQAMDFLCRGHMLADVSAILGSLDIVFGEVDR</sequence>
<dbReference type="EC" id="7.1.1.-" evidence="1"/>
<dbReference type="EMBL" id="CP000708">
    <property type="protein sequence ID" value="ABQ60185.1"/>
    <property type="molecule type" value="Genomic_DNA"/>
</dbReference>
<dbReference type="RefSeq" id="WP_002963940.1">
    <property type="nucleotide sequence ID" value="NC_009505.1"/>
</dbReference>
<dbReference type="SMR" id="A5VPY6"/>
<dbReference type="KEGG" id="bov:BOV_0800"/>
<dbReference type="HOGENOM" id="CLU_015134_1_1_5"/>
<dbReference type="PhylomeDB" id="A5VPY6"/>
<dbReference type="Proteomes" id="UP000006383">
    <property type="component" value="Chromosome I"/>
</dbReference>
<dbReference type="GO" id="GO:0005886">
    <property type="term" value="C:plasma membrane"/>
    <property type="evidence" value="ECO:0007669"/>
    <property type="project" value="UniProtKB-SubCell"/>
</dbReference>
<dbReference type="GO" id="GO:0051287">
    <property type="term" value="F:NAD binding"/>
    <property type="evidence" value="ECO:0007669"/>
    <property type="project" value="InterPro"/>
</dbReference>
<dbReference type="GO" id="GO:0050136">
    <property type="term" value="F:NADH:ubiquinone reductase (non-electrogenic) activity"/>
    <property type="evidence" value="ECO:0007669"/>
    <property type="project" value="UniProtKB-UniRule"/>
</dbReference>
<dbReference type="GO" id="GO:0048038">
    <property type="term" value="F:quinone binding"/>
    <property type="evidence" value="ECO:0007669"/>
    <property type="project" value="UniProtKB-KW"/>
</dbReference>
<dbReference type="FunFam" id="1.10.645.10:FF:000005">
    <property type="entry name" value="NADH-quinone oxidoreductase subunit D"/>
    <property type="match status" value="1"/>
</dbReference>
<dbReference type="Gene3D" id="1.10.645.10">
    <property type="entry name" value="Cytochrome-c3 Hydrogenase, chain B"/>
    <property type="match status" value="1"/>
</dbReference>
<dbReference type="HAMAP" id="MF_01358">
    <property type="entry name" value="NDH1_NuoD"/>
    <property type="match status" value="1"/>
</dbReference>
<dbReference type="InterPro" id="IPR001135">
    <property type="entry name" value="NADH_Q_OxRdtase_suD"/>
</dbReference>
<dbReference type="InterPro" id="IPR014029">
    <property type="entry name" value="NADH_UbQ_OxRdtase_49kDa_CS"/>
</dbReference>
<dbReference type="InterPro" id="IPR022885">
    <property type="entry name" value="NDH1_su_D/H"/>
</dbReference>
<dbReference type="InterPro" id="IPR029014">
    <property type="entry name" value="NiFe-Hase_large"/>
</dbReference>
<dbReference type="NCBIfam" id="TIGR01962">
    <property type="entry name" value="NuoD"/>
    <property type="match status" value="1"/>
</dbReference>
<dbReference type="NCBIfam" id="NF004739">
    <property type="entry name" value="PRK06075.1"/>
    <property type="match status" value="1"/>
</dbReference>
<dbReference type="PANTHER" id="PTHR11993:SF10">
    <property type="entry name" value="NADH DEHYDROGENASE [UBIQUINONE] IRON-SULFUR PROTEIN 2, MITOCHONDRIAL"/>
    <property type="match status" value="1"/>
</dbReference>
<dbReference type="PANTHER" id="PTHR11993">
    <property type="entry name" value="NADH-UBIQUINONE OXIDOREDUCTASE 49 KDA SUBUNIT"/>
    <property type="match status" value="1"/>
</dbReference>
<dbReference type="Pfam" id="PF00346">
    <property type="entry name" value="Complex1_49kDa"/>
    <property type="match status" value="1"/>
</dbReference>
<dbReference type="SUPFAM" id="SSF56762">
    <property type="entry name" value="HydB/Nqo4-like"/>
    <property type="match status" value="1"/>
</dbReference>
<dbReference type="PROSITE" id="PS00535">
    <property type="entry name" value="COMPLEX1_49K"/>
    <property type="match status" value="1"/>
</dbReference>
<comment type="function">
    <text evidence="1">NDH-1 shuttles electrons from NADH, via FMN and iron-sulfur (Fe-S) centers, to quinones in the respiratory chain. The immediate electron acceptor for the enzyme in this species is believed to be ubiquinone. Couples the redox reaction to proton translocation (for every two electrons transferred, four hydrogen ions are translocated across the cytoplasmic membrane), and thus conserves the redox energy in a proton gradient.</text>
</comment>
<comment type="catalytic activity">
    <reaction evidence="1">
        <text>a quinone + NADH + 5 H(+)(in) = a quinol + NAD(+) + 4 H(+)(out)</text>
        <dbReference type="Rhea" id="RHEA:57888"/>
        <dbReference type="ChEBI" id="CHEBI:15378"/>
        <dbReference type="ChEBI" id="CHEBI:24646"/>
        <dbReference type="ChEBI" id="CHEBI:57540"/>
        <dbReference type="ChEBI" id="CHEBI:57945"/>
        <dbReference type="ChEBI" id="CHEBI:132124"/>
    </reaction>
</comment>
<comment type="subunit">
    <text evidence="1">NDH-1 is composed of 14 different subunits. Subunits NuoB, C, D, E, F, and G constitute the peripheral sector of the complex.</text>
</comment>
<comment type="subcellular location">
    <subcellularLocation>
        <location evidence="1">Cell inner membrane</location>
        <topology evidence="1">Peripheral membrane protein</topology>
        <orientation evidence="1">Cytoplasmic side</orientation>
    </subcellularLocation>
</comment>
<comment type="similarity">
    <text evidence="1">Belongs to the complex I 49 kDa subunit family.</text>
</comment>
<proteinExistence type="inferred from homology"/>
<gene>
    <name evidence="1" type="primary">nuoD</name>
    <name type="ordered locus">BOV_0800</name>
</gene>
<name>NUOD_BRUO2</name>
<keyword id="KW-0997">Cell inner membrane</keyword>
<keyword id="KW-1003">Cell membrane</keyword>
<keyword id="KW-0472">Membrane</keyword>
<keyword id="KW-0520">NAD</keyword>
<keyword id="KW-0874">Quinone</keyword>
<keyword id="KW-1278">Translocase</keyword>
<keyword id="KW-0813">Transport</keyword>
<keyword id="KW-0830">Ubiquinone</keyword>
<evidence type="ECO:0000255" key="1">
    <source>
        <dbReference type="HAMAP-Rule" id="MF_01358"/>
    </source>
</evidence>